<protein>
    <recommendedName>
        <fullName>Uncharacterized protein AF_1126</fullName>
    </recommendedName>
</protein>
<keyword id="KW-1185">Reference proteome</keyword>
<reference key="1">
    <citation type="journal article" date="1997" name="Nature">
        <title>The complete genome sequence of the hyperthermophilic, sulphate-reducing archaeon Archaeoglobus fulgidus.</title>
        <authorList>
            <person name="Klenk H.-P."/>
            <person name="Clayton R.A."/>
            <person name="Tomb J.-F."/>
            <person name="White O."/>
            <person name="Nelson K.E."/>
            <person name="Ketchum K.A."/>
            <person name="Dodson R.J."/>
            <person name="Gwinn M.L."/>
            <person name="Hickey E.K."/>
            <person name="Peterson J.D."/>
            <person name="Richardson D.L."/>
            <person name="Kerlavage A.R."/>
            <person name="Graham D.E."/>
            <person name="Kyrpides N.C."/>
            <person name="Fleischmann R.D."/>
            <person name="Quackenbush J."/>
            <person name="Lee N.H."/>
            <person name="Sutton G.G."/>
            <person name="Gill S.R."/>
            <person name="Kirkness E.F."/>
            <person name="Dougherty B.A."/>
            <person name="McKenney K."/>
            <person name="Adams M.D."/>
            <person name="Loftus B.J."/>
            <person name="Peterson S.N."/>
            <person name="Reich C.I."/>
            <person name="McNeil L.K."/>
            <person name="Badger J.H."/>
            <person name="Glodek A."/>
            <person name="Zhou L."/>
            <person name="Overbeek R."/>
            <person name="Gocayne J.D."/>
            <person name="Weidman J.F."/>
            <person name="McDonald L.A."/>
            <person name="Utterback T.R."/>
            <person name="Cotton M.D."/>
            <person name="Spriggs T."/>
            <person name="Artiach P."/>
            <person name="Kaine B.P."/>
            <person name="Sykes S.M."/>
            <person name="Sadow P.W."/>
            <person name="D'Andrea K.P."/>
            <person name="Bowman C."/>
            <person name="Fujii C."/>
            <person name="Garland S.A."/>
            <person name="Mason T.M."/>
            <person name="Olsen G.J."/>
            <person name="Fraser C.M."/>
            <person name="Smith H.O."/>
            <person name="Woese C.R."/>
            <person name="Venter J.C."/>
        </authorList>
    </citation>
    <scope>NUCLEOTIDE SEQUENCE [LARGE SCALE GENOMIC DNA]</scope>
    <source>
        <strain>ATCC 49558 / DSM 4304 / JCM 9628 / NBRC 100126 / VC-16</strain>
    </source>
</reference>
<sequence>MKLMQIGVIGAGECDEETYRIAYRVGELIAEKGHVLINGGLGGVMEASAKGAKSKGGLVVAILPRKKDLCNDFADIRIATDMGHARNVIIVHSSDALISVGGGYGTISEIAIALKEGKRVASLKPPVVIEGMRVFETPEEAVNYCISSSVK</sequence>
<name>Y1126_ARCFU</name>
<feature type="chain" id="PRO_0000398678" description="Uncharacterized protein AF_1126">
    <location>
        <begin position="1"/>
        <end position="151"/>
    </location>
</feature>
<dbReference type="EMBL" id="AE000782">
    <property type="protein sequence ID" value="AAB90115.1"/>
    <property type="molecule type" value="Genomic_DNA"/>
</dbReference>
<dbReference type="PIR" id="E69390">
    <property type="entry name" value="E69390"/>
</dbReference>
<dbReference type="SMR" id="O29139"/>
<dbReference type="STRING" id="224325.AF_1126"/>
<dbReference type="PaxDb" id="224325-AF_1126"/>
<dbReference type="EnsemblBacteria" id="AAB90115">
    <property type="protein sequence ID" value="AAB90115"/>
    <property type="gene ID" value="AF_1126"/>
</dbReference>
<dbReference type="KEGG" id="afu:AF_1126"/>
<dbReference type="eggNOG" id="arCOG02431">
    <property type="taxonomic scope" value="Archaea"/>
</dbReference>
<dbReference type="HOGENOM" id="CLU_107614_1_1_2"/>
<dbReference type="OrthoDB" id="9570at2157"/>
<dbReference type="PhylomeDB" id="O29139"/>
<dbReference type="Proteomes" id="UP000002199">
    <property type="component" value="Chromosome"/>
</dbReference>
<dbReference type="GO" id="GO:0005829">
    <property type="term" value="C:cytosol"/>
    <property type="evidence" value="ECO:0007669"/>
    <property type="project" value="TreeGrafter"/>
</dbReference>
<dbReference type="Gene3D" id="3.40.50.450">
    <property type="match status" value="1"/>
</dbReference>
<dbReference type="InterPro" id="IPR005268">
    <property type="entry name" value="CHP00725"/>
</dbReference>
<dbReference type="InterPro" id="IPR041164">
    <property type="entry name" value="LDcluster4"/>
</dbReference>
<dbReference type="InterPro" id="IPR052341">
    <property type="entry name" value="LOG_family_nucleotidases"/>
</dbReference>
<dbReference type="NCBIfam" id="TIGR00725">
    <property type="entry name" value="TIGR00725 family protein"/>
    <property type="match status" value="1"/>
</dbReference>
<dbReference type="PANTHER" id="PTHR43393">
    <property type="entry name" value="CYTOKININ RIBOSIDE 5'-MONOPHOSPHATE PHOSPHORIBOHYDROLASE"/>
    <property type="match status" value="1"/>
</dbReference>
<dbReference type="PANTHER" id="PTHR43393:SF3">
    <property type="entry name" value="LYSINE DECARBOXYLASE-LIKE PROTEIN"/>
    <property type="match status" value="1"/>
</dbReference>
<dbReference type="Pfam" id="PF18306">
    <property type="entry name" value="LDcluster4"/>
    <property type="match status" value="1"/>
</dbReference>
<dbReference type="SUPFAM" id="SSF102405">
    <property type="entry name" value="MCP/YpsA-like"/>
    <property type="match status" value="1"/>
</dbReference>
<gene>
    <name type="ordered locus">AF_1126</name>
</gene>
<accession>O29139</accession>
<organism>
    <name type="scientific">Archaeoglobus fulgidus (strain ATCC 49558 / DSM 4304 / JCM 9628 / NBRC 100126 / VC-16)</name>
    <dbReference type="NCBI Taxonomy" id="224325"/>
    <lineage>
        <taxon>Archaea</taxon>
        <taxon>Methanobacteriati</taxon>
        <taxon>Methanobacteriota</taxon>
        <taxon>Archaeoglobi</taxon>
        <taxon>Archaeoglobales</taxon>
        <taxon>Archaeoglobaceae</taxon>
        <taxon>Archaeoglobus</taxon>
    </lineage>
</organism>
<proteinExistence type="predicted"/>